<comment type="function">
    <text evidence="1">Phosphatase that hydrolyzes non-canonical purine nucleotides such as XTP and ITP to their respective diphosphate derivatives. Probably excludes non-canonical purines from DNA/RNA precursor pool, thus preventing their incorporation into DNA/RNA and avoiding chromosomal lesions.</text>
</comment>
<comment type="catalytic activity">
    <reaction evidence="1">
        <text>XTP + H2O = XDP + phosphate + H(+)</text>
        <dbReference type="Rhea" id="RHEA:28406"/>
        <dbReference type="ChEBI" id="CHEBI:15377"/>
        <dbReference type="ChEBI" id="CHEBI:15378"/>
        <dbReference type="ChEBI" id="CHEBI:43474"/>
        <dbReference type="ChEBI" id="CHEBI:59884"/>
        <dbReference type="ChEBI" id="CHEBI:61314"/>
        <dbReference type="EC" id="3.6.1.73"/>
    </reaction>
</comment>
<comment type="catalytic activity">
    <reaction evidence="1">
        <text>ITP + H2O = IDP + phosphate + H(+)</text>
        <dbReference type="Rhea" id="RHEA:28330"/>
        <dbReference type="ChEBI" id="CHEBI:15377"/>
        <dbReference type="ChEBI" id="CHEBI:15378"/>
        <dbReference type="ChEBI" id="CHEBI:43474"/>
        <dbReference type="ChEBI" id="CHEBI:58280"/>
        <dbReference type="ChEBI" id="CHEBI:61402"/>
        <dbReference type="EC" id="3.6.1.73"/>
    </reaction>
</comment>
<comment type="cofactor">
    <cofactor evidence="1">
        <name>Mg(2+)</name>
        <dbReference type="ChEBI" id="CHEBI:18420"/>
    </cofactor>
    <cofactor evidence="1">
        <name>Mn(2+)</name>
        <dbReference type="ChEBI" id="CHEBI:29035"/>
    </cofactor>
    <text evidence="1">Binds 1 divalent metal cation per subunit; can use either Mg(2+) or Mn(2+).</text>
</comment>
<comment type="subunit">
    <text evidence="1">Homodimer.</text>
</comment>
<comment type="similarity">
    <text evidence="1">Belongs to the YjjX NTPase family.</text>
</comment>
<proteinExistence type="inferred from homology"/>
<keyword id="KW-0378">Hydrolase</keyword>
<keyword id="KW-0460">Magnesium</keyword>
<keyword id="KW-0464">Manganese</keyword>
<keyword id="KW-0479">Metal-binding</keyword>
<keyword id="KW-0546">Nucleotide metabolism</keyword>
<keyword id="KW-0547">Nucleotide-binding</keyword>
<keyword id="KW-1185">Reference proteome</keyword>
<dbReference type="EC" id="3.6.1.73" evidence="1"/>
<dbReference type="EMBL" id="BA000023">
    <property type="protein sequence ID" value="BAK54740.1"/>
    <property type="molecule type" value="Genomic_DNA"/>
</dbReference>
<dbReference type="RefSeq" id="WP_052847016.1">
    <property type="nucleotide sequence ID" value="NC_003106.2"/>
</dbReference>
<dbReference type="SMR" id="Q96YP8"/>
<dbReference type="STRING" id="273063.STK_21250"/>
<dbReference type="GeneID" id="1460197"/>
<dbReference type="KEGG" id="sto:STK_21250"/>
<dbReference type="PATRIC" id="fig|273063.9.peg.2417"/>
<dbReference type="eggNOG" id="arCOG01221">
    <property type="taxonomic scope" value="Archaea"/>
</dbReference>
<dbReference type="OrthoDB" id="52857at2157"/>
<dbReference type="Proteomes" id="UP000001015">
    <property type="component" value="Chromosome"/>
</dbReference>
<dbReference type="GO" id="GO:0103023">
    <property type="term" value="F:ITPase activity"/>
    <property type="evidence" value="ECO:0007669"/>
    <property type="project" value="UniProtKB-EC"/>
</dbReference>
<dbReference type="GO" id="GO:0046872">
    <property type="term" value="F:metal ion binding"/>
    <property type="evidence" value="ECO:0007669"/>
    <property type="project" value="UniProtKB-KW"/>
</dbReference>
<dbReference type="GO" id="GO:0000166">
    <property type="term" value="F:nucleotide binding"/>
    <property type="evidence" value="ECO:0007669"/>
    <property type="project" value="UniProtKB-KW"/>
</dbReference>
<dbReference type="GO" id="GO:0017111">
    <property type="term" value="F:ribonucleoside triphosphate phosphatase activity"/>
    <property type="evidence" value="ECO:0000250"/>
    <property type="project" value="UniProtKB"/>
</dbReference>
<dbReference type="GO" id="GO:0009117">
    <property type="term" value="P:nucleotide metabolic process"/>
    <property type="evidence" value="ECO:0007669"/>
    <property type="project" value="UniProtKB-KW"/>
</dbReference>
<dbReference type="GO" id="GO:0006772">
    <property type="term" value="P:thiamine metabolic process"/>
    <property type="evidence" value="ECO:0007669"/>
    <property type="project" value="TreeGrafter"/>
</dbReference>
<dbReference type="FunFam" id="3.90.950.10:FF:000002">
    <property type="entry name" value="Inosine/xanthosine triphosphatase"/>
    <property type="match status" value="1"/>
</dbReference>
<dbReference type="Gene3D" id="3.90.950.10">
    <property type="match status" value="1"/>
</dbReference>
<dbReference type="HAMAP" id="MF_00648">
    <property type="entry name" value="Non_canon_purine_NTPase_YjjX"/>
    <property type="match status" value="1"/>
</dbReference>
<dbReference type="InterPro" id="IPR029001">
    <property type="entry name" value="ITPase-like_fam"/>
</dbReference>
<dbReference type="InterPro" id="IPR002786">
    <property type="entry name" value="Non_canon_purine_NTPase"/>
</dbReference>
<dbReference type="InterPro" id="IPR026533">
    <property type="entry name" value="NTPase/PRRC1"/>
</dbReference>
<dbReference type="InterPro" id="IPR050299">
    <property type="entry name" value="YjjX_NTPase"/>
</dbReference>
<dbReference type="NCBIfam" id="TIGR00258">
    <property type="entry name" value="inosine/xanthosine triphosphatase"/>
    <property type="match status" value="1"/>
</dbReference>
<dbReference type="PANTHER" id="PTHR34699">
    <property type="match status" value="1"/>
</dbReference>
<dbReference type="PANTHER" id="PTHR34699:SF2">
    <property type="entry name" value="NON-CANONICAL PURINE NTP PHOSPHATASE_PRRC1 DOMAIN-CONTAINING PROTEIN"/>
    <property type="match status" value="1"/>
</dbReference>
<dbReference type="Pfam" id="PF01931">
    <property type="entry name" value="NTPase_I-T"/>
    <property type="match status" value="1"/>
</dbReference>
<dbReference type="SUPFAM" id="SSF52972">
    <property type="entry name" value="ITPase-like"/>
    <property type="match status" value="1"/>
</dbReference>
<name>NCPP_SULTO</name>
<reference key="1">
    <citation type="journal article" date="2001" name="DNA Res.">
        <title>Complete genome sequence of an aerobic thermoacidophilic Crenarchaeon, Sulfolobus tokodaii strain7.</title>
        <authorList>
            <person name="Kawarabayasi Y."/>
            <person name="Hino Y."/>
            <person name="Horikawa H."/>
            <person name="Jin-no K."/>
            <person name="Takahashi M."/>
            <person name="Sekine M."/>
            <person name="Baba S."/>
            <person name="Ankai A."/>
            <person name="Kosugi H."/>
            <person name="Hosoyama A."/>
            <person name="Fukui S."/>
            <person name="Nagai Y."/>
            <person name="Nishijima K."/>
            <person name="Otsuka R."/>
            <person name="Nakazawa H."/>
            <person name="Takamiya M."/>
            <person name="Kato Y."/>
            <person name="Yoshizawa T."/>
            <person name="Tanaka T."/>
            <person name="Kudoh Y."/>
            <person name="Yamazaki J."/>
            <person name="Kushida N."/>
            <person name="Oguchi A."/>
            <person name="Aoki K."/>
            <person name="Masuda S."/>
            <person name="Yanagii M."/>
            <person name="Nishimura M."/>
            <person name="Yamagishi A."/>
            <person name="Oshima T."/>
            <person name="Kikuchi H."/>
        </authorList>
    </citation>
    <scope>NUCLEOTIDE SEQUENCE [LARGE SCALE GENOMIC DNA]</scope>
    <source>
        <strain>DSM 16993 / JCM 10545 / NBRC 100140 / 7</strain>
    </source>
</reference>
<protein>
    <recommendedName>
        <fullName evidence="1">Probable inosine/xanthosine triphosphatase</fullName>
        <shortName evidence="1">ITPase/XTPase</shortName>
        <ecNumber evidence="1">3.6.1.73</ecNumber>
    </recommendedName>
    <alternativeName>
        <fullName evidence="1">Non-canonical purine NTP phosphatase</fullName>
    </alternativeName>
    <alternativeName>
        <fullName evidence="1">Non-standard purine NTP phosphatase</fullName>
    </alternativeName>
    <alternativeName>
        <fullName evidence="1">Nucleoside-triphosphate phosphatase</fullName>
        <shortName evidence="1">NTPase</shortName>
    </alternativeName>
</protein>
<feature type="chain" id="PRO_0000156365" description="Probable inosine/xanthosine triphosphatase">
    <location>
        <begin position="1"/>
        <end position="169"/>
    </location>
</feature>
<feature type="binding site" evidence="1">
    <location>
        <begin position="7"/>
        <end position="12"/>
    </location>
    <ligand>
        <name>substrate</name>
    </ligand>
</feature>
<feature type="binding site" evidence="1">
    <location>
        <position position="35"/>
    </location>
    <ligand>
        <name>Mg(2+)</name>
        <dbReference type="ChEBI" id="CHEBI:18420"/>
    </ligand>
</feature>
<accession>Q96YP8</accession>
<accession>F9VP93</accession>
<evidence type="ECO:0000255" key="1">
    <source>
        <dbReference type="HAMAP-Rule" id="MF_00648"/>
    </source>
</evidence>
<sequence>MFVAIGSTNKAKVEAVKEALKIIGLNADVISVNVESGVSSQPFCHETFVGAKNRAYNALNATNADIGIGIEGGICYYENKYLAFAVVYAANKEGLENFSFSMAFSLPYSMVKHILEGRELGEATDLIFSTKDSKQHEGAIGYLTKVITRKELYIQPVIAALYPFYNKIE</sequence>
<organism>
    <name type="scientific">Sulfurisphaera tokodaii (strain DSM 16993 / JCM 10545 / NBRC 100140 / 7)</name>
    <name type="common">Sulfolobus tokodaii</name>
    <dbReference type="NCBI Taxonomy" id="273063"/>
    <lineage>
        <taxon>Archaea</taxon>
        <taxon>Thermoproteota</taxon>
        <taxon>Thermoprotei</taxon>
        <taxon>Sulfolobales</taxon>
        <taxon>Sulfolobaceae</taxon>
        <taxon>Sulfurisphaera</taxon>
    </lineage>
</organism>
<gene>
    <name type="ordered locus">STK_21250</name>
</gene>